<dbReference type="EMBL" id="AF406650">
    <property type="protein sequence ID" value="AAK95655.1"/>
    <property type="molecule type" value="mRNA"/>
</dbReference>
<dbReference type="CCDS" id="CCDS8447.1"/>
<dbReference type="RefSeq" id="NP_443191.1">
    <property type="nucleotide sequence ID" value="NM_052959.3"/>
</dbReference>
<dbReference type="PDB" id="7XL6">
    <property type="method" value="EM"/>
    <property type="resolution" value="3.25 A"/>
    <property type="chains" value="A/B/C/D/E/F/G=1-392"/>
</dbReference>
<dbReference type="PDB" id="8GTR">
    <property type="method" value="EM"/>
    <property type="resolution" value="3.91 A"/>
    <property type="chains" value="A/B/C/D/E/F/G=1-392"/>
</dbReference>
<dbReference type="PDB" id="8GYP">
    <property type="method" value="EM"/>
    <property type="resolution" value="3.50 A"/>
    <property type="chains" value="A/B/C/D/E/F/G=1-392"/>
</dbReference>
<dbReference type="PDB" id="8GYT">
    <property type="method" value="EM"/>
    <property type="resolution" value="3.68 A"/>
    <property type="chains" value="A/B/C/D/E/F/G=1-392"/>
</dbReference>
<dbReference type="PDB" id="8HWQ">
    <property type="method" value="EM"/>
    <property type="resolution" value="3.58 A"/>
    <property type="chains" value="A/B/C/D/E/F/G=1-377"/>
</dbReference>
<dbReference type="PDB" id="8WZA">
    <property type="method" value="EM"/>
    <property type="resolution" value="2.77 A"/>
    <property type="chains" value="A/B/C/D/E/F/G=1-392"/>
</dbReference>
<dbReference type="PDB" id="9KOM">
    <property type="method" value="EM"/>
    <property type="resolution" value="3.20 A"/>
    <property type="chains" value="A=1-392"/>
</dbReference>
<dbReference type="PDB" id="9KRG">
    <property type="method" value="EM"/>
    <property type="resolution" value="2.90 A"/>
    <property type="chains" value="A=1-392"/>
</dbReference>
<dbReference type="PDBsum" id="7XL6"/>
<dbReference type="PDBsum" id="8GTR"/>
<dbReference type="PDBsum" id="8GYP"/>
<dbReference type="PDBsum" id="8GYT"/>
<dbReference type="PDBsum" id="8HWQ"/>
<dbReference type="PDBsum" id="8WZA"/>
<dbReference type="PDBsum" id="9KOM"/>
<dbReference type="PDBsum" id="9KRG"/>
<dbReference type="EMDB" id="EMD-33273"/>
<dbReference type="EMDB" id="EMD-34265"/>
<dbReference type="EMDB" id="EMD-34375"/>
<dbReference type="EMDB" id="EMD-34377"/>
<dbReference type="EMDB" id="EMD-35062"/>
<dbReference type="EMDB" id="EMD-37948"/>
<dbReference type="EMDB" id="EMD-62478"/>
<dbReference type="EMDB" id="EMD-62526"/>
<dbReference type="SMR" id="Q96QZ0"/>
<dbReference type="BioGRID" id="125498">
    <property type="interactions" value="2"/>
</dbReference>
<dbReference type="FunCoup" id="Q96QZ0">
    <property type="interactions" value="58"/>
</dbReference>
<dbReference type="IntAct" id="Q96QZ0">
    <property type="interactions" value="1"/>
</dbReference>
<dbReference type="STRING" id="9606.ENSP00000284288"/>
<dbReference type="TCDB" id="1.A.25.2.3">
    <property type="family name" value="the gap junction-forming innexin (innexin) family"/>
</dbReference>
<dbReference type="GlyCosmos" id="Q96QZ0">
    <property type="glycosylation" value="1 site, No reported glycans"/>
</dbReference>
<dbReference type="GlyGen" id="Q96QZ0">
    <property type="glycosylation" value="1 site"/>
</dbReference>
<dbReference type="iPTMnet" id="Q96QZ0"/>
<dbReference type="PhosphoSitePlus" id="Q96QZ0"/>
<dbReference type="BioMuta" id="PANX3"/>
<dbReference type="DMDM" id="20139071"/>
<dbReference type="PaxDb" id="9606-ENSP00000284288"/>
<dbReference type="ProteomicsDB" id="77913"/>
<dbReference type="Antibodypedia" id="53990">
    <property type="antibodies" value="92 antibodies from 20 providers"/>
</dbReference>
<dbReference type="DNASU" id="116337"/>
<dbReference type="Ensembl" id="ENST00000284288.3">
    <property type="protein sequence ID" value="ENSP00000284288.2"/>
    <property type="gene ID" value="ENSG00000154143.3"/>
</dbReference>
<dbReference type="GeneID" id="116337"/>
<dbReference type="KEGG" id="hsa:116337"/>
<dbReference type="MANE-Select" id="ENST00000284288.3">
    <property type="protein sequence ID" value="ENSP00000284288.2"/>
    <property type="RefSeq nucleotide sequence ID" value="NM_052959.3"/>
    <property type="RefSeq protein sequence ID" value="NP_443191.1"/>
</dbReference>
<dbReference type="UCSC" id="uc001qah.4">
    <property type="organism name" value="human"/>
</dbReference>
<dbReference type="AGR" id="HGNC:20573"/>
<dbReference type="CTD" id="116337"/>
<dbReference type="DisGeNET" id="116337"/>
<dbReference type="GeneCards" id="PANX3"/>
<dbReference type="HGNC" id="HGNC:20573">
    <property type="gene designation" value="PANX3"/>
</dbReference>
<dbReference type="HPA" id="ENSG00000154143">
    <property type="expression patterns" value="Not detected"/>
</dbReference>
<dbReference type="MIM" id="608422">
    <property type="type" value="gene"/>
</dbReference>
<dbReference type="neXtProt" id="NX_Q96QZ0"/>
<dbReference type="OpenTargets" id="ENSG00000154143"/>
<dbReference type="PharmGKB" id="PA134920643"/>
<dbReference type="VEuPathDB" id="HostDB:ENSG00000154143"/>
<dbReference type="eggNOG" id="ENOG502QRDI">
    <property type="taxonomic scope" value="Eukaryota"/>
</dbReference>
<dbReference type="GeneTree" id="ENSGT00940000153972"/>
<dbReference type="HOGENOM" id="CLU_050054_1_0_1"/>
<dbReference type="InParanoid" id="Q96QZ0"/>
<dbReference type="OMA" id="GQDKMKS"/>
<dbReference type="OrthoDB" id="10056939at2759"/>
<dbReference type="PAN-GO" id="Q96QZ0">
    <property type="GO annotations" value="4 GO annotations based on evolutionary models"/>
</dbReference>
<dbReference type="PhylomeDB" id="Q96QZ0"/>
<dbReference type="TreeFam" id="TF333142"/>
<dbReference type="PathwayCommons" id="Q96QZ0"/>
<dbReference type="SignaLink" id="Q96QZ0"/>
<dbReference type="BioGRID-ORCS" id="116337">
    <property type="hits" value="13 hits in 1142 CRISPR screens"/>
</dbReference>
<dbReference type="GenomeRNAi" id="116337"/>
<dbReference type="Pharos" id="Q96QZ0">
    <property type="development level" value="Tbio"/>
</dbReference>
<dbReference type="PRO" id="PR:Q96QZ0"/>
<dbReference type="Proteomes" id="UP000005640">
    <property type="component" value="Chromosome 11"/>
</dbReference>
<dbReference type="RNAct" id="Q96QZ0">
    <property type="molecule type" value="protein"/>
</dbReference>
<dbReference type="Bgee" id="ENSG00000154143">
    <property type="expression patterns" value="Expressed in tibia and 19 other cell types or tissues"/>
</dbReference>
<dbReference type="GO" id="GO:0005789">
    <property type="term" value="C:endoplasmic reticulum membrane"/>
    <property type="evidence" value="ECO:0000250"/>
    <property type="project" value="UniProtKB"/>
</dbReference>
<dbReference type="GO" id="GO:0005921">
    <property type="term" value="C:gap junction"/>
    <property type="evidence" value="ECO:0000250"/>
    <property type="project" value="UniProtKB"/>
</dbReference>
<dbReference type="GO" id="GO:0005886">
    <property type="term" value="C:plasma membrane"/>
    <property type="evidence" value="ECO:0000318"/>
    <property type="project" value="GO_Central"/>
</dbReference>
<dbReference type="GO" id="GO:0005262">
    <property type="term" value="F:calcium channel activity"/>
    <property type="evidence" value="ECO:0000250"/>
    <property type="project" value="UniProtKB"/>
</dbReference>
<dbReference type="GO" id="GO:0055077">
    <property type="term" value="F:gap junction hemi-channel activity"/>
    <property type="evidence" value="ECO:0000250"/>
    <property type="project" value="UniProtKB"/>
</dbReference>
<dbReference type="GO" id="GO:0005198">
    <property type="term" value="F:structural molecule activity"/>
    <property type="evidence" value="ECO:0000250"/>
    <property type="project" value="UniProtKB"/>
</dbReference>
<dbReference type="GO" id="GO:0022829">
    <property type="term" value="F:wide pore channel activity"/>
    <property type="evidence" value="ECO:0000318"/>
    <property type="project" value="GO_Central"/>
</dbReference>
<dbReference type="GO" id="GO:0007267">
    <property type="term" value="P:cell-cell signaling"/>
    <property type="evidence" value="ECO:0000318"/>
    <property type="project" value="GO_Central"/>
</dbReference>
<dbReference type="GO" id="GO:0006812">
    <property type="term" value="P:monoatomic cation transport"/>
    <property type="evidence" value="ECO:0000318"/>
    <property type="project" value="GO_Central"/>
</dbReference>
<dbReference type="GO" id="GO:0001649">
    <property type="term" value="P:osteoblast differentiation"/>
    <property type="evidence" value="ECO:0000250"/>
    <property type="project" value="UniProtKB"/>
</dbReference>
<dbReference type="GO" id="GO:0032732">
    <property type="term" value="P:positive regulation of interleukin-1 production"/>
    <property type="evidence" value="ECO:0007669"/>
    <property type="project" value="InterPro"/>
</dbReference>
<dbReference type="InterPro" id="IPR000990">
    <property type="entry name" value="Innexin"/>
</dbReference>
<dbReference type="InterPro" id="IPR039099">
    <property type="entry name" value="Pannexin"/>
</dbReference>
<dbReference type="PANTHER" id="PTHR15759">
    <property type="entry name" value="PANNEXIN"/>
    <property type="match status" value="1"/>
</dbReference>
<dbReference type="PANTHER" id="PTHR15759:SF3">
    <property type="entry name" value="PANNEXIN-3"/>
    <property type="match status" value="1"/>
</dbReference>
<dbReference type="Pfam" id="PF00876">
    <property type="entry name" value="Innexin"/>
    <property type="match status" value="1"/>
</dbReference>
<dbReference type="PROSITE" id="PS51013">
    <property type="entry name" value="PANNEXIN"/>
    <property type="match status" value="1"/>
</dbReference>
<accession>Q96QZ0</accession>
<gene>
    <name evidence="5" type="primary">PANX3</name>
</gene>
<feature type="chain" id="PRO_0000208491" description="Pannexin-3">
    <location>
        <begin position="1"/>
        <end position="392"/>
    </location>
</feature>
<feature type="topological domain" description="Cytoplasmic" evidence="2">
    <location>
        <begin position="1"/>
        <end position="39"/>
    </location>
</feature>
<feature type="transmembrane region" description="Helical" evidence="3">
    <location>
        <begin position="40"/>
        <end position="60"/>
    </location>
</feature>
<feature type="topological domain" description="Extracellular" evidence="2">
    <location>
        <begin position="61"/>
        <end position="113"/>
    </location>
</feature>
<feature type="transmembrane region" description="Helical" evidence="3">
    <location>
        <begin position="114"/>
        <end position="134"/>
    </location>
</feature>
<feature type="topological domain" description="Cytoplasmic" evidence="2">
    <location>
        <begin position="135"/>
        <end position="215"/>
    </location>
</feature>
<feature type="transmembrane region" description="Helical" evidence="3">
    <location>
        <begin position="216"/>
        <end position="236"/>
    </location>
</feature>
<feature type="topological domain" description="Extracellular" evidence="2">
    <location>
        <begin position="237"/>
        <end position="267"/>
    </location>
</feature>
<feature type="transmembrane region" description="Helical" evidence="3">
    <location>
        <begin position="268"/>
        <end position="288"/>
    </location>
</feature>
<feature type="topological domain" description="Cytoplasmic" evidence="2">
    <location>
        <begin position="289"/>
        <end position="392"/>
    </location>
</feature>
<feature type="glycosylation site" description="N-linked (GlcNAc...) asparagine" evidence="2">
    <location>
        <position position="71"/>
    </location>
</feature>
<feature type="sequence variant" id="VAR_034367" description="In dbSNP:rs34498516.">
    <original>G</original>
    <variation>R</variation>
    <location>
        <position position="95"/>
    </location>
</feature>
<feature type="sequence variant" id="VAR_034368" description="In dbSNP:rs35569094.">
    <original>T</original>
    <variation>A</variation>
    <location>
        <position position="208"/>
    </location>
</feature>
<feature type="helix" evidence="7">
    <location>
        <begin position="3"/>
        <end position="10"/>
    </location>
</feature>
<feature type="strand" evidence="7">
    <location>
        <begin position="11"/>
        <end position="13"/>
    </location>
</feature>
<feature type="strand" evidence="7">
    <location>
        <begin position="16"/>
        <end position="19"/>
    </location>
</feature>
<feature type="turn" evidence="7">
    <location>
        <begin position="23"/>
        <end position="27"/>
    </location>
</feature>
<feature type="helix" evidence="7">
    <location>
        <begin position="33"/>
        <end position="53"/>
    </location>
</feature>
<feature type="strand" evidence="7">
    <location>
        <begin position="63"/>
        <end position="66"/>
    </location>
</feature>
<feature type="helix" evidence="7">
    <location>
        <begin position="74"/>
        <end position="82"/>
    </location>
</feature>
<feature type="strand" evidence="7">
    <location>
        <begin position="89"/>
        <end position="91"/>
    </location>
</feature>
<feature type="strand" evidence="7">
    <location>
        <begin position="101"/>
        <end position="103"/>
    </location>
</feature>
<feature type="helix" evidence="7">
    <location>
        <begin position="105"/>
        <end position="120"/>
    </location>
</feature>
<feature type="helix" evidence="7">
    <location>
        <begin position="123"/>
        <end position="131"/>
    </location>
</feature>
<feature type="helix" evidence="7">
    <location>
        <begin position="133"/>
        <end position="147"/>
    </location>
</feature>
<feature type="turn" evidence="7">
    <location>
        <begin position="152"/>
        <end position="159"/>
    </location>
</feature>
<feature type="helix" evidence="7">
    <location>
        <begin position="160"/>
        <end position="167"/>
    </location>
</feature>
<feature type="helix" evidence="7">
    <location>
        <begin position="170"/>
        <end position="173"/>
    </location>
</feature>
<feature type="helix" evidence="7">
    <location>
        <begin position="178"/>
        <end position="182"/>
    </location>
</feature>
<feature type="turn" evidence="7">
    <location>
        <begin position="185"/>
        <end position="187"/>
    </location>
</feature>
<feature type="helix" evidence="7">
    <location>
        <begin position="192"/>
        <end position="200"/>
    </location>
</feature>
<feature type="helix" evidence="7">
    <location>
        <begin position="205"/>
        <end position="229"/>
    </location>
</feature>
<feature type="turn" evidence="7">
    <location>
        <begin position="230"/>
        <end position="233"/>
    </location>
</feature>
<feature type="strand" evidence="7">
    <location>
        <begin position="234"/>
        <end position="236"/>
    </location>
</feature>
<feature type="strand" evidence="8">
    <location>
        <begin position="239"/>
        <end position="241"/>
    </location>
</feature>
<feature type="strand" evidence="7">
    <location>
        <begin position="250"/>
        <end position="254"/>
    </location>
</feature>
<feature type="strand" evidence="7">
    <location>
        <begin position="261"/>
        <end position="263"/>
    </location>
</feature>
<feature type="helix" evidence="7">
    <location>
        <begin position="266"/>
        <end position="295"/>
    </location>
</feature>
<feature type="helix" evidence="7">
    <location>
        <begin position="302"/>
        <end position="307"/>
    </location>
</feature>
<feature type="helix" evidence="7">
    <location>
        <begin position="309"/>
        <end position="316"/>
    </location>
</feature>
<feature type="helix" evidence="7">
    <location>
        <begin position="325"/>
        <end position="334"/>
    </location>
</feature>
<feature type="strand" evidence="7">
    <location>
        <begin position="339"/>
        <end position="341"/>
    </location>
</feature>
<feature type="turn" evidence="7">
    <location>
        <begin position="342"/>
        <end position="350"/>
    </location>
</feature>
<feature type="helix" evidence="7">
    <location>
        <begin position="362"/>
        <end position="365"/>
    </location>
</feature>
<feature type="helix" evidence="7">
    <location>
        <begin position="366"/>
        <end position="368"/>
    </location>
</feature>
<feature type="turn" evidence="7">
    <location>
        <begin position="369"/>
        <end position="371"/>
    </location>
</feature>
<feature type="helix" evidence="7">
    <location>
        <begin position="372"/>
        <end position="374"/>
    </location>
</feature>
<organism>
    <name type="scientific">Homo sapiens</name>
    <name type="common">Human</name>
    <dbReference type="NCBI Taxonomy" id="9606"/>
    <lineage>
        <taxon>Eukaryota</taxon>
        <taxon>Metazoa</taxon>
        <taxon>Chordata</taxon>
        <taxon>Craniata</taxon>
        <taxon>Vertebrata</taxon>
        <taxon>Euteleostomi</taxon>
        <taxon>Mammalia</taxon>
        <taxon>Eutheria</taxon>
        <taxon>Euarchontoglires</taxon>
        <taxon>Primates</taxon>
        <taxon>Haplorrhini</taxon>
        <taxon>Catarrhini</taxon>
        <taxon>Hominidae</taxon>
        <taxon>Homo</taxon>
    </lineage>
</organism>
<name>PANX3_HUMAN</name>
<comment type="function">
    <text evidence="1">Regulator of osteoblast differentiation by functionning as a Ca(2+) channel in the endoplasmic reticulum which regulates calmodulin (CaM) pathways. Allows ATP release into the extracellular space and activation or purinergic receptors.</text>
</comment>
<comment type="catalytic activity">
    <reaction evidence="1">
        <text>Ca(2+)(in) = Ca(2+)(out)</text>
        <dbReference type="Rhea" id="RHEA:29671"/>
        <dbReference type="ChEBI" id="CHEBI:29108"/>
    </reaction>
</comment>
<comment type="catalytic activity">
    <reaction evidence="1">
        <text>ATP(in) = ATP(out)</text>
        <dbReference type="Rhea" id="RHEA:75687"/>
        <dbReference type="ChEBI" id="CHEBI:30616"/>
    </reaction>
</comment>
<comment type="subunit">
    <text evidence="4 6">Homoheptameric.</text>
</comment>
<comment type="subcellular location">
    <subcellularLocation>
        <location evidence="1">Cell membrane</location>
        <topology evidence="3">Multi-pass membrane protein</topology>
    </subcellularLocation>
    <subcellularLocation>
        <location evidence="1">Cell junction</location>
        <location evidence="1">Gap junction</location>
    </subcellularLocation>
    <subcellularLocation>
        <location evidence="1">Endoplasmic reticulum membrane</location>
        <topology evidence="3">Multi-pass membrane protein</topology>
    </subcellularLocation>
</comment>
<comment type="similarity">
    <text evidence="3">Belongs to the pannexin family.</text>
</comment>
<comment type="online information" name="Wikipedia">
    <link uri="https://en.wikipedia.org/wiki/Pannexin"/>
    <text>Pannexin entry</text>
</comment>
<evidence type="ECO:0000250" key="1">
    <source>
        <dbReference type="UniProtKB" id="Q8CEG0"/>
    </source>
</evidence>
<evidence type="ECO:0000255" key="2"/>
<evidence type="ECO:0000255" key="3">
    <source>
        <dbReference type="PROSITE-ProRule" id="PRU00351"/>
    </source>
</evidence>
<evidence type="ECO:0000269" key="4">
    <source ref="2"/>
</evidence>
<evidence type="ECO:0000312" key="5">
    <source>
        <dbReference type="HGNC" id="HGNC:20573"/>
    </source>
</evidence>
<evidence type="ECO:0007744" key="6">
    <source>
        <dbReference type="PDB" id="7XL6"/>
    </source>
</evidence>
<evidence type="ECO:0007829" key="7">
    <source>
        <dbReference type="PDB" id="7XL6"/>
    </source>
</evidence>
<evidence type="ECO:0007829" key="8">
    <source>
        <dbReference type="PDB" id="8GYP"/>
    </source>
</evidence>
<protein>
    <recommendedName>
        <fullName>Pannexin-3</fullName>
    </recommendedName>
</protein>
<keyword id="KW-0002">3D-structure</keyword>
<keyword id="KW-0965">Cell junction</keyword>
<keyword id="KW-1003">Cell membrane</keyword>
<keyword id="KW-0256">Endoplasmic reticulum</keyword>
<keyword id="KW-0303">Gap junction</keyword>
<keyword id="KW-0325">Glycoprotein</keyword>
<keyword id="KW-0407">Ion channel</keyword>
<keyword id="KW-0406">Ion transport</keyword>
<keyword id="KW-0472">Membrane</keyword>
<keyword id="KW-1185">Reference proteome</keyword>
<keyword id="KW-0812">Transmembrane</keyword>
<keyword id="KW-1133">Transmembrane helix</keyword>
<keyword id="KW-0813">Transport</keyword>
<reference key="1">
    <citation type="journal article" date="2004" name="Genomics">
        <title>The mammalian pannexin family is homologous to the invertebrate innexin gap junction proteins.</title>
        <authorList>
            <person name="Baranova A."/>
            <person name="Ivanov D."/>
            <person name="Petrash N."/>
            <person name="Pestova A."/>
            <person name="Skoblov M."/>
            <person name="Kelmanson I."/>
            <person name="Shagin D."/>
            <person name="Nazarenko S."/>
            <person name="Geraymovych E."/>
            <person name="Litvin O."/>
            <person name="Tiunova A."/>
            <person name="Born T.L."/>
            <person name="Usman N."/>
            <person name="Staroverov D."/>
            <person name="Lukyanov S."/>
            <person name="Panchin Y."/>
        </authorList>
    </citation>
    <scope>NUCLEOTIDE SEQUENCE [MRNA]</scope>
</reference>
<reference evidence="6" key="2">
    <citation type="submission" date="2022-04" db="PDB data bank">
        <title>Cryo-EM structure of human pannexin 3.</title>
        <authorList>
            <person name="Hang Z."/>
            <person name="Huawei Z."/>
            <person name="Daping W."/>
        </authorList>
    </citation>
    <scope>STRUCTURE BY ELECTRON MICROSCOPY (3.25 ANGSTROMS)</scope>
    <scope>SUBUNIT</scope>
</reference>
<proteinExistence type="evidence at protein level"/>
<sequence>MSLAHTAAEYMLSDALLPDRRGPRLKGLRLELPLDRIVKFVAVGSPLLLMSLAFAQEFSSGSPISCFSPSNFSIRQAAYVDSSCWDSLLHHKQDGPGQDKMKSLWPHKALPYSLLALALLMYLPVLLWQYAAVPALSSDLLFIISELDKSYNRSIRLVQHMLKIRQKSSDPYVFWNELEKARKERYFEFPLLERYLACKQRSHSLVATYLLRNSLLLIFTSATYLYLGHFHLDVFFQEEFSCSIKTGLLSDETHVPNLITCRLTSLSIFQIVSLSSVAIYTILVPVIIYNLTRLCRWDKRLLSVYEMLPAFDLLSRKMLGCPINDLNVILLFLRANISELISFSWLSVLCVLKDTTTQKHNIDTVVDFMTLLAGLEPSKPKHLTNSACDEHP</sequence>